<gene>
    <name evidence="11" type="primary">ATPSCKMT</name>
    <name evidence="7" type="synonym">FAM173B</name>
</gene>
<keyword id="KW-0007">Acetylation</keyword>
<keyword id="KW-0025">Alternative splicing</keyword>
<keyword id="KW-0472">Membrane</keyword>
<keyword id="KW-0489">Methyltransferase</keyword>
<keyword id="KW-0496">Mitochondrion</keyword>
<keyword id="KW-1267">Proteomics identification</keyword>
<keyword id="KW-1185">Reference proteome</keyword>
<keyword id="KW-0949">S-adenosyl-L-methionine</keyword>
<keyword id="KW-0808">Transferase</keyword>
<keyword id="KW-0812">Transmembrane</keyword>
<keyword id="KW-1133">Transmembrane helix</keyword>
<dbReference type="EC" id="2.1.1.-" evidence="4 5"/>
<dbReference type="EMBL" id="AK300042">
    <property type="protein sequence ID" value="BAG61853.1"/>
    <property type="molecule type" value="mRNA"/>
</dbReference>
<dbReference type="EMBL" id="AK302012">
    <property type="protein sequence ID" value="BAG63414.1"/>
    <property type="molecule type" value="mRNA"/>
</dbReference>
<dbReference type="EMBL" id="AC012640">
    <property type="status" value="NOT_ANNOTATED_CDS"/>
    <property type="molecule type" value="Genomic_DNA"/>
</dbReference>
<dbReference type="EMBL" id="AC034229">
    <property type="status" value="NOT_ANNOTATED_CDS"/>
    <property type="molecule type" value="Genomic_DNA"/>
</dbReference>
<dbReference type="EMBL" id="CH471102">
    <property type="protein sequence ID" value="EAX08074.1"/>
    <property type="molecule type" value="Genomic_DNA"/>
</dbReference>
<dbReference type="EMBL" id="BC063406">
    <property type="protein sequence ID" value="AAH63406.1"/>
    <property type="molecule type" value="mRNA"/>
</dbReference>
<dbReference type="CCDS" id="CCDS43301.1">
    <molecule id="Q6P4H8-1"/>
</dbReference>
<dbReference type="CCDS" id="CCDS58942.1">
    <molecule id="Q6P4H8-2"/>
</dbReference>
<dbReference type="RefSeq" id="NP_001245317.1">
    <molecule id="Q6P4H8-2"/>
    <property type="nucleotide sequence ID" value="NM_001258388.2"/>
</dbReference>
<dbReference type="RefSeq" id="NP_954584.2">
    <molecule id="Q6P4H8-1"/>
    <property type="nucleotide sequence ID" value="NM_199133.4"/>
</dbReference>
<dbReference type="SMR" id="Q6P4H8"/>
<dbReference type="BioGRID" id="126386">
    <property type="interactions" value="9"/>
</dbReference>
<dbReference type="FunCoup" id="Q6P4H8">
    <property type="interactions" value="1347"/>
</dbReference>
<dbReference type="IntAct" id="Q6P4H8">
    <property type="interactions" value="7"/>
</dbReference>
<dbReference type="STRING" id="9606.ENSP00000422338"/>
<dbReference type="GlyGen" id="Q6P4H8">
    <property type="glycosylation" value="1 site"/>
</dbReference>
<dbReference type="iPTMnet" id="Q6P4H8"/>
<dbReference type="PhosphoSitePlus" id="Q6P4H8"/>
<dbReference type="BioMuta" id="FAM173B"/>
<dbReference type="DMDM" id="190360174"/>
<dbReference type="jPOST" id="Q6P4H8"/>
<dbReference type="MassIVE" id="Q6P4H8"/>
<dbReference type="PaxDb" id="9606-ENSP00000422338"/>
<dbReference type="PeptideAtlas" id="Q6P4H8"/>
<dbReference type="ProteomicsDB" id="19326"/>
<dbReference type="ProteomicsDB" id="66979">
    <molecule id="Q6P4H8-1"/>
</dbReference>
<dbReference type="Pumba" id="Q6P4H8"/>
<dbReference type="Antibodypedia" id="22448">
    <property type="antibodies" value="65 antibodies from 21 providers"/>
</dbReference>
<dbReference type="DNASU" id="134145"/>
<dbReference type="Ensembl" id="ENST00000510047.5">
    <molecule id="Q6P4H8-2"/>
    <property type="protein sequence ID" value="ENSP00000420876.1"/>
    <property type="gene ID" value="ENSG00000150756.14"/>
</dbReference>
<dbReference type="Ensembl" id="ENST00000511437.6">
    <molecule id="Q6P4H8-1"/>
    <property type="protein sequence ID" value="ENSP00000422338.1"/>
    <property type="gene ID" value="ENSG00000150756.14"/>
</dbReference>
<dbReference type="GeneID" id="134145"/>
<dbReference type="KEGG" id="hsa:134145"/>
<dbReference type="MANE-Select" id="ENST00000511437.6">
    <property type="protein sequence ID" value="ENSP00000422338.1"/>
    <property type="RefSeq nucleotide sequence ID" value="NM_199133.4"/>
    <property type="RefSeq protein sequence ID" value="NP_954584.2"/>
</dbReference>
<dbReference type="UCSC" id="uc003jeo.4">
    <molecule id="Q6P4H8-1"/>
    <property type="organism name" value="human"/>
</dbReference>
<dbReference type="AGR" id="HGNC:27029"/>
<dbReference type="CTD" id="134145"/>
<dbReference type="DisGeNET" id="134145"/>
<dbReference type="GeneCards" id="ATPSCKMT"/>
<dbReference type="HGNC" id="HGNC:27029">
    <property type="gene designation" value="ATPSCKMT"/>
</dbReference>
<dbReference type="HPA" id="ENSG00000150756">
    <property type="expression patterns" value="Low tissue specificity"/>
</dbReference>
<dbReference type="MIM" id="618568">
    <property type="type" value="gene"/>
</dbReference>
<dbReference type="neXtProt" id="NX_Q6P4H8"/>
<dbReference type="OpenTargets" id="ENSG00000150756"/>
<dbReference type="PharmGKB" id="PA162387281"/>
<dbReference type="VEuPathDB" id="HostDB:ENSG00000150756"/>
<dbReference type="eggNOG" id="KOG4058">
    <property type="taxonomic scope" value="Eukaryota"/>
</dbReference>
<dbReference type="GeneTree" id="ENSGT00390000014771"/>
<dbReference type="HOGENOM" id="CLU_068443_4_0_1"/>
<dbReference type="InParanoid" id="Q6P4H8"/>
<dbReference type="OMA" id="NPWLVAY"/>
<dbReference type="OrthoDB" id="66144at2759"/>
<dbReference type="PAN-GO" id="Q6P4H8">
    <property type="GO annotations" value="5 GO annotations based on evolutionary models"/>
</dbReference>
<dbReference type="PhylomeDB" id="Q6P4H8"/>
<dbReference type="TreeFam" id="TF314984"/>
<dbReference type="PathwayCommons" id="Q6P4H8"/>
<dbReference type="SignaLink" id="Q6P4H8"/>
<dbReference type="BioGRID-ORCS" id="134145">
    <property type="hits" value="9 hits in 1153 CRISPR screens"/>
</dbReference>
<dbReference type="ChiTaRS" id="FAM173B">
    <property type="organism name" value="human"/>
</dbReference>
<dbReference type="GenomeRNAi" id="134145"/>
<dbReference type="Pharos" id="Q6P4H8">
    <property type="development level" value="Tbio"/>
</dbReference>
<dbReference type="PRO" id="PR:Q6P4H8"/>
<dbReference type="Proteomes" id="UP000005640">
    <property type="component" value="Chromosome 5"/>
</dbReference>
<dbReference type="RNAct" id="Q6P4H8">
    <property type="molecule type" value="protein"/>
</dbReference>
<dbReference type="Bgee" id="ENSG00000150756">
    <property type="expression patterns" value="Expressed in ileal mucosa and 169 other cell types or tissues"/>
</dbReference>
<dbReference type="ExpressionAtlas" id="Q6P4H8">
    <property type="expression patterns" value="baseline and differential"/>
</dbReference>
<dbReference type="GO" id="GO:0030061">
    <property type="term" value="C:mitochondrial crista"/>
    <property type="evidence" value="ECO:0000314"/>
    <property type="project" value="UniProtKB"/>
</dbReference>
<dbReference type="GO" id="GO:0005739">
    <property type="term" value="C:mitochondrion"/>
    <property type="evidence" value="ECO:0000314"/>
    <property type="project" value="UniProtKB"/>
</dbReference>
<dbReference type="GO" id="GO:0016279">
    <property type="term" value="F:protein-lysine N-methyltransferase activity"/>
    <property type="evidence" value="ECO:0000314"/>
    <property type="project" value="UniProtKB"/>
</dbReference>
<dbReference type="GO" id="GO:0018022">
    <property type="term" value="P:peptidyl-lysine methylation"/>
    <property type="evidence" value="ECO:0000314"/>
    <property type="project" value="UniProtKB"/>
</dbReference>
<dbReference type="GO" id="GO:0018023">
    <property type="term" value="P:peptidyl-lysine trimethylation"/>
    <property type="evidence" value="ECO:0000315"/>
    <property type="project" value="UniProtKB"/>
</dbReference>
<dbReference type="GO" id="GO:1905273">
    <property type="term" value="P:positive regulation of proton-transporting ATP synthase activity, rotational mechanism"/>
    <property type="evidence" value="ECO:0000315"/>
    <property type="project" value="UniProtKB"/>
</dbReference>
<dbReference type="GO" id="GO:1904058">
    <property type="term" value="P:positive regulation of sensory perception of pain"/>
    <property type="evidence" value="ECO:0000315"/>
    <property type="project" value="UniProtKB"/>
</dbReference>
<dbReference type="GO" id="GO:1905706">
    <property type="term" value="P:regulation of mitochondrial ATP synthesis coupled proton transport"/>
    <property type="evidence" value="ECO:0000315"/>
    <property type="project" value="UniProtKB"/>
</dbReference>
<dbReference type="FunFam" id="3.40.50.150:FF:000141">
    <property type="entry name" value="ATP synthase c subunit lysine N-methyltransferase"/>
    <property type="match status" value="1"/>
</dbReference>
<dbReference type="Gene3D" id="3.40.50.150">
    <property type="entry name" value="Vaccinia Virus protein VP39"/>
    <property type="match status" value="1"/>
</dbReference>
<dbReference type="InterPro" id="IPR026170">
    <property type="entry name" value="FAM173A/B"/>
</dbReference>
<dbReference type="InterPro" id="IPR029063">
    <property type="entry name" value="SAM-dependent_MTases_sf"/>
</dbReference>
<dbReference type="PANTHER" id="PTHR13610:SF8">
    <property type="entry name" value="ATP SYNTHASE SUBUNIT C LYSINE N-METHYLTRANSFERASE"/>
    <property type="match status" value="1"/>
</dbReference>
<dbReference type="PANTHER" id="PTHR13610">
    <property type="entry name" value="METHYLTRANSFERASE DOMAIN-CONTAINING PROTEIN"/>
    <property type="match status" value="1"/>
</dbReference>
<dbReference type="SUPFAM" id="SSF53335">
    <property type="entry name" value="S-adenosyl-L-methionine-dependent methyltransferases"/>
    <property type="match status" value="1"/>
</dbReference>
<evidence type="ECO:0000255" key="1"/>
<evidence type="ECO:0000269" key="2">
    <source>
    </source>
</evidence>
<evidence type="ECO:0000269" key="3">
    <source>
    </source>
</evidence>
<evidence type="ECO:0000269" key="4">
    <source>
    </source>
</evidence>
<evidence type="ECO:0000269" key="5">
    <source>
    </source>
</evidence>
<evidence type="ECO:0000303" key="6">
    <source>
    </source>
</evidence>
<evidence type="ECO:0000303" key="7">
    <source>
    </source>
</evidence>
<evidence type="ECO:0000303" key="8">
    <source>
    </source>
</evidence>
<evidence type="ECO:0000305" key="9"/>
<evidence type="ECO:0000305" key="10">
    <source>
    </source>
</evidence>
<evidence type="ECO:0000312" key="11">
    <source>
        <dbReference type="HGNC" id="HGNC:27029"/>
    </source>
</evidence>
<evidence type="ECO:0007744" key="12">
    <source>
    </source>
</evidence>
<comment type="function">
    <text evidence="4 5">Mitochondrial protein-lysine N-methyltransferase that trimethylates ATP synthase subunit C, ATP5MC1 and ATP5MC2. Trimethylation is required for proper incorporation of the C subunit into the ATP synthase complex and mitochondrial respiration (PubMed:29444090, PubMed:30530489). Promotes chronic pain (PubMed:29444090). Involved in persistent inflammatory and neuropathic pain: methyltransferase activity in the mitochondria of sensory neurons promotes chronic pain via a pathway that depends on the production of reactive oxygen species (ROS) and on the engagement of spinal cord microglia (PubMed:29444090).</text>
</comment>
<comment type="catalytic activity">
    <reaction evidence="4 5">
        <text>L-lysyl-[protein] + 3 S-adenosyl-L-methionine = N(6),N(6),N(6)-trimethyl-L-lysyl-[protein] + 3 S-adenosyl-L-homocysteine + 3 H(+)</text>
        <dbReference type="Rhea" id="RHEA:54192"/>
        <dbReference type="Rhea" id="RHEA-COMP:9752"/>
        <dbReference type="Rhea" id="RHEA-COMP:13826"/>
        <dbReference type="ChEBI" id="CHEBI:15378"/>
        <dbReference type="ChEBI" id="CHEBI:29969"/>
        <dbReference type="ChEBI" id="CHEBI:57856"/>
        <dbReference type="ChEBI" id="CHEBI:59789"/>
        <dbReference type="ChEBI" id="CHEBI:61961"/>
    </reaction>
    <physiologicalReaction direction="left-to-right" evidence="4 5">
        <dbReference type="Rhea" id="RHEA:54193"/>
    </physiologicalReaction>
</comment>
<comment type="interaction">
    <interactant intactId="EBI-12382465">
        <id>Q6P4H8</id>
    </interactant>
    <interactant intactId="EBI-16439278">
        <id>Q6FHY5</id>
        <label>MEOX2</label>
    </interactant>
    <organismsDiffer>false</organismsDiffer>
    <experiments>3</experiments>
</comment>
<comment type="subcellular location">
    <subcellularLocation>
        <location evidence="5 10">Mitochondrion membrane</location>
        <topology evidence="1">Single-pass membrane protein</topology>
    </subcellularLocation>
    <text evidence="4">Localizes to mitochondrial cristae.</text>
</comment>
<comment type="alternative products">
    <event type="alternative splicing"/>
    <isoform>
        <id>Q6P4H8-1</id>
        <name>1</name>
        <sequence type="displayed"/>
    </isoform>
    <isoform>
        <id>Q6P4H8-2</id>
        <name>2</name>
        <sequence type="described" ref="VSP_044724"/>
    </isoform>
</comment>
<comment type="tissue specificity">
    <text evidence="4">Ubiquitously expressed.</text>
</comment>
<comment type="domain">
    <text evidence="5">Contains an atypical, non-cleavable mitochondrial targeting sequence responsible for its localization to mitochondria.</text>
</comment>
<comment type="similarity">
    <text evidence="9">Belongs to the ANT/ATPSC lysine N-methyltransferase family.</text>
</comment>
<accession>Q6P4H8</accession>
<accession>B4DT41</accession>
<accession>B4DXK2</accession>
<accession>E9PBZ4</accession>
<reference key="1">
    <citation type="journal article" date="2004" name="Nat. Genet.">
        <title>Complete sequencing and characterization of 21,243 full-length human cDNAs.</title>
        <authorList>
            <person name="Ota T."/>
            <person name="Suzuki Y."/>
            <person name="Nishikawa T."/>
            <person name="Otsuki T."/>
            <person name="Sugiyama T."/>
            <person name="Irie R."/>
            <person name="Wakamatsu A."/>
            <person name="Hayashi K."/>
            <person name="Sato H."/>
            <person name="Nagai K."/>
            <person name="Kimura K."/>
            <person name="Makita H."/>
            <person name="Sekine M."/>
            <person name="Obayashi M."/>
            <person name="Nishi T."/>
            <person name="Shibahara T."/>
            <person name="Tanaka T."/>
            <person name="Ishii S."/>
            <person name="Yamamoto J."/>
            <person name="Saito K."/>
            <person name="Kawai Y."/>
            <person name="Isono Y."/>
            <person name="Nakamura Y."/>
            <person name="Nagahari K."/>
            <person name="Murakami K."/>
            <person name="Yasuda T."/>
            <person name="Iwayanagi T."/>
            <person name="Wagatsuma M."/>
            <person name="Shiratori A."/>
            <person name="Sudo H."/>
            <person name="Hosoiri T."/>
            <person name="Kaku Y."/>
            <person name="Kodaira H."/>
            <person name="Kondo H."/>
            <person name="Sugawara M."/>
            <person name="Takahashi M."/>
            <person name="Kanda K."/>
            <person name="Yokoi T."/>
            <person name="Furuya T."/>
            <person name="Kikkawa E."/>
            <person name="Omura Y."/>
            <person name="Abe K."/>
            <person name="Kamihara K."/>
            <person name="Katsuta N."/>
            <person name="Sato K."/>
            <person name="Tanikawa M."/>
            <person name="Yamazaki M."/>
            <person name="Ninomiya K."/>
            <person name="Ishibashi T."/>
            <person name="Yamashita H."/>
            <person name="Murakawa K."/>
            <person name="Fujimori K."/>
            <person name="Tanai H."/>
            <person name="Kimata M."/>
            <person name="Watanabe M."/>
            <person name="Hiraoka S."/>
            <person name="Chiba Y."/>
            <person name="Ishida S."/>
            <person name="Ono Y."/>
            <person name="Takiguchi S."/>
            <person name="Watanabe S."/>
            <person name="Yosida M."/>
            <person name="Hotuta T."/>
            <person name="Kusano J."/>
            <person name="Kanehori K."/>
            <person name="Takahashi-Fujii A."/>
            <person name="Hara H."/>
            <person name="Tanase T.-O."/>
            <person name="Nomura Y."/>
            <person name="Togiya S."/>
            <person name="Komai F."/>
            <person name="Hara R."/>
            <person name="Takeuchi K."/>
            <person name="Arita M."/>
            <person name="Imose N."/>
            <person name="Musashino K."/>
            <person name="Yuuki H."/>
            <person name="Oshima A."/>
            <person name="Sasaki N."/>
            <person name="Aotsuka S."/>
            <person name="Yoshikawa Y."/>
            <person name="Matsunawa H."/>
            <person name="Ichihara T."/>
            <person name="Shiohata N."/>
            <person name="Sano S."/>
            <person name="Moriya S."/>
            <person name="Momiyama H."/>
            <person name="Satoh N."/>
            <person name="Takami S."/>
            <person name="Terashima Y."/>
            <person name="Suzuki O."/>
            <person name="Nakagawa S."/>
            <person name="Senoh A."/>
            <person name="Mizoguchi H."/>
            <person name="Goto Y."/>
            <person name="Shimizu F."/>
            <person name="Wakebe H."/>
            <person name="Hishigaki H."/>
            <person name="Watanabe T."/>
            <person name="Sugiyama A."/>
            <person name="Takemoto M."/>
            <person name="Kawakami B."/>
            <person name="Yamazaki M."/>
            <person name="Watanabe K."/>
            <person name="Kumagai A."/>
            <person name="Itakura S."/>
            <person name="Fukuzumi Y."/>
            <person name="Fujimori Y."/>
            <person name="Komiyama M."/>
            <person name="Tashiro H."/>
            <person name="Tanigami A."/>
            <person name="Fujiwara T."/>
            <person name="Ono T."/>
            <person name="Yamada K."/>
            <person name="Fujii Y."/>
            <person name="Ozaki K."/>
            <person name="Hirao M."/>
            <person name="Ohmori Y."/>
            <person name="Kawabata A."/>
            <person name="Hikiji T."/>
            <person name="Kobatake N."/>
            <person name="Inagaki H."/>
            <person name="Ikema Y."/>
            <person name="Okamoto S."/>
            <person name="Okitani R."/>
            <person name="Kawakami T."/>
            <person name="Noguchi S."/>
            <person name="Itoh T."/>
            <person name="Shigeta K."/>
            <person name="Senba T."/>
            <person name="Matsumura K."/>
            <person name="Nakajima Y."/>
            <person name="Mizuno T."/>
            <person name="Morinaga M."/>
            <person name="Sasaki M."/>
            <person name="Togashi T."/>
            <person name="Oyama M."/>
            <person name="Hata H."/>
            <person name="Watanabe M."/>
            <person name="Komatsu T."/>
            <person name="Mizushima-Sugano J."/>
            <person name="Satoh T."/>
            <person name="Shirai Y."/>
            <person name="Takahashi Y."/>
            <person name="Nakagawa K."/>
            <person name="Okumura K."/>
            <person name="Nagase T."/>
            <person name="Nomura N."/>
            <person name="Kikuchi H."/>
            <person name="Masuho Y."/>
            <person name="Yamashita R."/>
            <person name="Nakai K."/>
            <person name="Yada T."/>
            <person name="Nakamura Y."/>
            <person name="Ohara O."/>
            <person name="Isogai T."/>
            <person name="Sugano S."/>
        </authorList>
    </citation>
    <scope>NUCLEOTIDE SEQUENCE [LARGE SCALE MRNA] (ISOFORMS 1 AND 2)</scope>
    <scope>VARIANT MET-75</scope>
    <source>
        <tissue>Testis</tissue>
    </source>
</reference>
<reference key="2">
    <citation type="journal article" date="2004" name="Nature">
        <title>The DNA sequence and comparative analysis of human chromosome 5.</title>
        <authorList>
            <person name="Schmutz J."/>
            <person name="Martin J."/>
            <person name="Terry A."/>
            <person name="Couronne O."/>
            <person name="Grimwood J."/>
            <person name="Lowry S."/>
            <person name="Gordon L.A."/>
            <person name="Scott D."/>
            <person name="Xie G."/>
            <person name="Huang W."/>
            <person name="Hellsten U."/>
            <person name="Tran-Gyamfi M."/>
            <person name="She X."/>
            <person name="Prabhakar S."/>
            <person name="Aerts A."/>
            <person name="Altherr M."/>
            <person name="Bajorek E."/>
            <person name="Black S."/>
            <person name="Branscomb E."/>
            <person name="Caoile C."/>
            <person name="Challacombe J.F."/>
            <person name="Chan Y.M."/>
            <person name="Denys M."/>
            <person name="Detter J.C."/>
            <person name="Escobar J."/>
            <person name="Flowers D."/>
            <person name="Fotopulos D."/>
            <person name="Glavina T."/>
            <person name="Gomez M."/>
            <person name="Gonzales E."/>
            <person name="Goodstein D."/>
            <person name="Grigoriev I."/>
            <person name="Groza M."/>
            <person name="Hammon N."/>
            <person name="Hawkins T."/>
            <person name="Haydu L."/>
            <person name="Israni S."/>
            <person name="Jett J."/>
            <person name="Kadner K."/>
            <person name="Kimball H."/>
            <person name="Kobayashi A."/>
            <person name="Lopez F."/>
            <person name="Lou Y."/>
            <person name="Martinez D."/>
            <person name="Medina C."/>
            <person name="Morgan J."/>
            <person name="Nandkeshwar R."/>
            <person name="Noonan J.P."/>
            <person name="Pitluck S."/>
            <person name="Pollard M."/>
            <person name="Predki P."/>
            <person name="Priest J."/>
            <person name="Ramirez L."/>
            <person name="Retterer J."/>
            <person name="Rodriguez A."/>
            <person name="Rogers S."/>
            <person name="Salamov A."/>
            <person name="Salazar A."/>
            <person name="Thayer N."/>
            <person name="Tice H."/>
            <person name="Tsai M."/>
            <person name="Ustaszewska A."/>
            <person name="Vo N."/>
            <person name="Wheeler J."/>
            <person name="Wu K."/>
            <person name="Yang J."/>
            <person name="Dickson M."/>
            <person name="Cheng J.-F."/>
            <person name="Eichler E.E."/>
            <person name="Olsen A."/>
            <person name="Pennacchio L.A."/>
            <person name="Rokhsar D.S."/>
            <person name="Richardson P."/>
            <person name="Lucas S.M."/>
            <person name="Myers R.M."/>
            <person name="Rubin E.M."/>
        </authorList>
    </citation>
    <scope>NUCLEOTIDE SEQUENCE [LARGE SCALE GENOMIC DNA]</scope>
</reference>
<reference key="3">
    <citation type="submission" date="2005-09" db="EMBL/GenBank/DDBJ databases">
        <authorList>
            <person name="Mural R.J."/>
            <person name="Istrail S."/>
            <person name="Sutton G.G."/>
            <person name="Florea L."/>
            <person name="Halpern A.L."/>
            <person name="Mobarry C.M."/>
            <person name="Lippert R."/>
            <person name="Walenz B."/>
            <person name="Shatkay H."/>
            <person name="Dew I."/>
            <person name="Miller J.R."/>
            <person name="Flanigan M.J."/>
            <person name="Edwards N.J."/>
            <person name="Bolanos R."/>
            <person name="Fasulo D."/>
            <person name="Halldorsson B.V."/>
            <person name="Hannenhalli S."/>
            <person name="Turner R."/>
            <person name="Yooseph S."/>
            <person name="Lu F."/>
            <person name="Nusskern D.R."/>
            <person name="Shue B.C."/>
            <person name="Zheng X.H."/>
            <person name="Zhong F."/>
            <person name="Delcher A.L."/>
            <person name="Huson D.H."/>
            <person name="Kravitz S.A."/>
            <person name="Mouchard L."/>
            <person name="Reinert K."/>
            <person name="Remington K.A."/>
            <person name="Clark A.G."/>
            <person name="Waterman M.S."/>
            <person name="Eichler E.E."/>
            <person name="Adams M.D."/>
            <person name="Hunkapiller M.W."/>
            <person name="Myers E.W."/>
            <person name="Venter J.C."/>
        </authorList>
    </citation>
    <scope>NUCLEOTIDE SEQUENCE [LARGE SCALE GENOMIC DNA]</scope>
</reference>
<reference key="4">
    <citation type="journal article" date="2004" name="Genome Res.">
        <title>The status, quality, and expansion of the NIH full-length cDNA project: the Mammalian Gene Collection (MGC).</title>
        <authorList>
            <consortium name="The MGC Project Team"/>
        </authorList>
    </citation>
    <scope>NUCLEOTIDE SEQUENCE [LARGE SCALE MRNA] (ISOFORM 1)</scope>
    <scope>VARIANT MET-75</scope>
    <source>
        <tissue>Colon</tissue>
    </source>
</reference>
<reference key="5">
    <citation type="journal article" date="2012" name="Proc. Natl. Acad. Sci. U.S.A.">
        <title>N-terminal acetylome analyses and functional insights of the N-terminal acetyltransferase NatB.</title>
        <authorList>
            <person name="Van Damme P."/>
            <person name="Lasa M."/>
            <person name="Polevoda B."/>
            <person name="Gazquez C."/>
            <person name="Elosegui-Artola A."/>
            <person name="Kim D.S."/>
            <person name="De Juan-Pardo E."/>
            <person name="Demeyer K."/>
            <person name="Hole K."/>
            <person name="Larrea E."/>
            <person name="Timmerman E."/>
            <person name="Prieto J."/>
            <person name="Arnesen T."/>
            <person name="Sherman F."/>
            <person name="Gevaert K."/>
            <person name="Aldabe R."/>
        </authorList>
    </citation>
    <scope>ACETYLATION [LARGE SCALE ANALYSIS] AT MET-1</scope>
    <scope>IDENTIFICATION BY MASS SPECTROMETRY [LARGE SCALE ANALYSIS]</scope>
</reference>
<reference key="6">
    <citation type="journal article" date="2018" name="PLoS Biol.">
        <title>Identification of FAM173B as a protein methyltransferase promoting chronic pain.</title>
        <authorList>
            <person name="Willemen H.L.D.M."/>
            <person name="Kavelaars A."/>
            <person name="Prado J."/>
            <person name="Maas M."/>
            <person name="Versteeg S."/>
            <person name="Nellissen L.J.J."/>
            <person name="Tromp J."/>
            <person name="Gonzalez Cano R."/>
            <person name="Zhou W."/>
            <person name="Jakobsson M.E."/>
            <person name="Malecki J."/>
            <person name="Posthuma G."/>
            <person name="Habib A.M."/>
            <person name="Heijnen C.J."/>
            <person name="Falnes P.O."/>
            <person name="Eijkelkamp N."/>
        </authorList>
    </citation>
    <scope>FUNCTION</scope>
    <scope>SUBCELLULAR LOCATION</scope>
    <scope>TISSUE SPECIFICITY</scope>
    <scope>MUTAGENESIS OF ASP-94</scope>
</reference>
<reference key="7">
    <citation type="journal article" date="2019" name="J. Biol. Chem.">
        <title>Lysine methylation by the mitochondrial methyltransferase FAM173B optimizes the function of mitochondrial ATP synthase.</title>
        <authorList>
            <person name="Malecki J.M."/>
            <person name="Willemen H.L.D.M."/>
            <person name="Pinto R."/>
            <person name="Ho A.Y.Y."/>
            <person name="Moen A."/>
            <person name="Kjoenstad I.F."/>
            <person name="Burgering B.M.T."/>
            <person name="Zwartkruis F."/>
            <person name="Eijkelkamp N."/>
            <person name="Falnes P.O."/>
        </authorList>
    </citation>
    <scope>FUNCTION</scope>
    <scope>SUBCELLULAR LOCATION</scope>
    <scope>CATALYTIC ACTIVITY</scope>
    <scope>DOMAIN</scope>
    <scope>MUTAGENESIS OF GLU-117</scope>
</reference>
<sequence>MEGGGGIPLETLKEESQSRHVLPASFEVNSLQKSNWGFLLTGLVGGTLVAVYAVATPFVTPALRKVCLPFVPATTKQIENVVKMLRCRRGSLVDIGSGDGRIVIAAAKKGFTAVGYELNPWLVWYSRYRAWREGVHGSAKFYISDLWKVTFSQYSNVVIFGVPQMMLQLEKKLERELEDDARVIACRFPFPHWTPDHVTGEGIDTVWAYDASTFRGREKRPCTSMHFQLPIQA</sequence>
<name>ACKMT_HUMAN</name>
<protein>
    <recommendedName>
        <fullName evidence="8 9">ATP synthase subunit C lysine N-methyltransferase</fullName>
        <ecNumber evidence="4 5">2.1.1.-</ecNumber>
    </recommendedName>
    <alternativeName>
        <fullName evidence="9">Protein N-lysine methyltransferase FAM173B</fullName>
        <shortName evidence="7">hFAM173B</shortName>
    </alternativeName>
</protein>
<feature type="chain" id="PRO_0000321536" description="ATP synthase subunit C lysine N-methyltransferase">
    <location>
        <begin position="1"/>
        <end position="233"/>
    </location>
</feature>
<feature type="transmembrane region" description="Helical" evidence="1">
    <location>
        <begin position="38"/>
        <end position="58"/>
    </location>
</feature>
<feature type="region of interest" description="Required for mitochondrial location" evidence="5">
    <location>
        <begin position="56"/>
        <end position="90"/>
    </location>
</feature>
<feature type="modified residue" description="N-acetylmethionine" evidence="12">
    <location>
        <position position="1"/>
    </location>
</feature>
<feature type="splice variant" id="VSP_044724" description="In isoform 2." evidence="6">
    <location>
        <begin position="149"/>
        <end position="165"/>
    </location>
</feature>
<feature type="sequence variant" id="VAR_039345" description="In dbSNP:rs2438652." evidence="2 3">
    <original>T</original>
    <variation>M</variation>
    <location>
        <position position="75"/>
    </location>
</feature>
<feature type="sequence variant" id="VAR_039346" description="In dbSNP:rs16884350.">
    <original>A</original>
    <variation>V</variation>
    <location>
        <position position="105"/>
    </location>
</feature>
<feature type="sequence variant" id="VAR_039347" description="In dbSNP:rs17360625.">
    <original>V</original>
    <variation>A</variation>
    <location>
        <position position="114"/>
    </location>
</feature>
<feature type="sequence variant" id="VAR_039348" description="In dbSNP:rs15757.">
    <original>L</original>
    <variation>M</variation>
    <location>
        <position position="229"/>
    </location>
</feature>
<feature type="mutagenesis site" description="Abolished protein-lysine N-methyltransferase activity and ability to promote chronic pain." evidence="4">
    <original>D</original>
    <variation>A</variation>
    <location>
        <position position="94"/>
    </location>
</feature>
<feature type="mutagenesis site" description="Abolished protein-lysine N-methyltransferase activity." evidence="5">
    <original>E</original>
    <variation>A</variation>
    <location>
        <position position="117"/>
    </location>
</feature>
<proteinExistence type="evidence at protein level"/>
<organism>
    <name type="scientific">Homo sapiens</name>
    <name type="common">Human</name>
    <dbReference type="NCBI Taxonomy" id="9606"/>
    <lineage>
        <taxon>Eukaryota</taxon>
        <taxon>Metazoa</taxon>
        <taxon>Chordata</taxon>
        <taxon>Craniata</taxon>
        <taxon>Vertebrata</taxon>
        <taxon>Euteleostomi</taxon>
        <taxon>Mammalia</taxon>
        <taxon>Eutheria</taxon>
        <taxon>Euarchontoglires</taxon>
        <taxon>Primates</taxon>
        <taxon>Haplorrhini</taxon>
        <taxon>Catarrhini</taxon>
        <taxon>Hominidae</taxon>
        <taxon>Homo</taxon>
    </lineage>
</organism>